<proteinExistence type="inferred from homology"/>
<feature type="chain" id="PRO_1000009076" description="Phosphoheptose isomerase">
    <location>
        <begin position="1"/>
        <end position="195"/>
    </location>
</feature>
<feature type="domain" description="SIS" evidence="1">
    <location>
        <begin position="36"/>
        <end position="195"/>
    </location>
</feature>
<feature type="binding site" evidence="1">
    <location>
        <begin position="51"/>
        <end position="53"/>
    </location>
    <ligand>
        <name>substrate</name>
    </ligand>
</feature>
<feature type="binding site" evidence="1">
    <location>
        <position position="60"/>
    </location>
    <ligand>
        <name>Zn(2+)</name>
        <dbReference type="ChEBI" id="CHEBI:29105"/>
    </ligand>
</feature>
<feature type="binding site" evidence="1">
    <location>
        <position position="64"/>
    </location>
    <ligand>
        <name>substrate</name>
    </ligand>
</feature>
<feature type="binding site" evidence="1">
    <location>
        <position position="64"/>
    </location>
    <ligand>
        <name>Zn(2+)</name>
        <dbReference type="ChEBI" id="CHEBI:29105"/>
    </ligand>
</feature>
<feature type="binding site" evidence="1">
    <location>
        <begin position="95"/>
        <end position="96"/>
    </location>
    <ligand>
        <name>substrate</name>
    </ligand>
</feature>
<feature type="binding site" evidence="1">
    <location>
        <begin position="121"/>
        <end position="123"/>
    </location>
    <ligand>
        <name>substrate</name>
    </ligand>
</feature>
<feature type="binding site" evidence="1">
    <location>
        <position position="126"/>
    </location>
    <ligand>
        <name>substrate</name>
    </ligand>
</feature>
<feature type="binding site" evidence="1">
    <location>
        <position position="173"/>
    </location>
    <ligand>
        <name>substrate</name>
    </ligand>
</feature>
<feature type="binding site" evidence="1">
    <location>
        <position position="173"/>
    </location>
    <ligand>
        <name>Zn(2+)</name>
        <dbReference type="ChEBI" id="CHEBI:29105"/>
    </ligand>
</feature>
<feature type="binding site" evidence="1">
    <location>
        <position position="181"/>
    </location>
    <ligand>
        <name>Zn(2+)</name>
        <dbReference type="ChEBI" id="CHEBI:29105"/>
    </ligand>
</feature>
<sequence length="195" mass="20803">MDIKEIALGQIRDSIATKQKCIDSILGDITKAGEMVSKVLQSGNTVYLCGNGGSSCDASHIAAELVVRYKSGNERKALPALSLSGDSAVLTACSNDYGYEEIFARQIEAFGRKGDLLIGLSTSGNSKNVLLALEKAKTRGVKTISLLGGDGGRIKNLSDLDIIVPSKVTARIQESHILIGHILCSIVEYNLFKME</sequence>
<name>GMHA_LEPBL</name>
<gene>
    <name evidence="1" type="primary">gmhA</name>
    <name type="ordered locus">LBL_1368</name>
</gene>
<organism>
    <name type="scientific">Leptospira borgpetersenii serovar Hardjo-bovis (strain L550)</name>
    <dbReference type="NCBI Taxonomy" id="355276"/>
    <lineage>
        <taxon>Bacteria</taxon>
        <taxon>Pseudomonadati</taxon>
        <taxon>Spirochaetota</taxon>
        <taxon>Spirochaetia</taxon>
        <taxon>Leptospirales</taxon>
        <taxon>Leptospiraceae</taxon>
        <taxon>Leptospira</taxon>
    </lineage>
</organism>
<evidence type="ECO:0000255" key="1">
    <source>
        <dbReference type="HAMAP-Rule" id="MF_00067"/>
    </source>
</evidence>
<dbReference type="EC" id="5.3.1.28" evidence="1"/>
<dbReference type="EMBL" id="CP000348">
    <property type="protein sequence ID" value="ABJ78858.1"/>
    <property type="molecule type" value="Genomic_DNA"/>
</dbReference>
<dbReference type="RefSeq" id="WP_002750963.1">
    <property type="nucleotide sequence ID" value="NC_008508.1"/>
</dbReference>
<dbReference type="SMR" id="Q051Y7"/>
<dbReference type="KEGG" id="lbl:LBL_1368"/>
<dbReference type="HOGENOM" id="CLU_080999_4_0_12"/>
<dbReference type="UniPathway" id="UPA00041">
    <property type="reaction ID" value="UER00436"/>
</dbReference>
<dbReference type="GO" id="GO:0005737">
    <property type="term" value="C:cytoplasm"/>
    <property type="evidence" value="ECO:0007669"/>
    <property type="project" value="UniProtKB-SubCell"/>
</dbReference>
<dbReference type="GO" id="GO:0097367">
    <property type="term" value="F:carbohydrate derivative binding"/>
    <property type="evidence" value="ECO:0007669"/>
    <property type="project" value="InterPro"/>
</dbReference>
<dbReference type="GO" id="GO:0008968">
    <property type="term" value="F:D-sedoheptulose 7-phosphate isomerase activity"/>
    <property type="evidence" value="ECO:0007669"/>
    <property type="project" value="UniProtKB-UniRule"/>
</dbReference>
<dbReference type="GO" id="GO:0008270">
    <property type="term" value="F:zinc ion binding"/>
    <property type="evidence" value="ECO:0007669"/>
    <property type="project" value="UniProtKB-UniRule"/>
</dbReference>
<dbReference type="GO" id="GO:0005975">
    <property type="term" value="P:carbohydrate metabolic process"/>
    <property type="evidence" value="ECO:0007669"/>
    <property type="project" value="UniProtKB-UniRule"/>
</dbReference>
<dbReference type="GO" id="GO:2001061">
    <property type="term" value="P:D-glycero-D-manno-heptose 7-phosphate biosynthetic process"/>
    <property type="evidence" value="ECO:0007669"/>
    <property type="project" value="UniProtKB-UniPathway"/>
</dbReference>
<dbReference type="CDD" id="cd05006">
    <property type="entry name" value="SIS_GmhA"/>
    <property type="match status" value="1"/>
</dbReference>
<dbReference type="Gene3D" id="3.40.50.10490">
    <property type="entry name" value="Glucose-6-phosphate isomerase like protein, domain 1"/>
    <property type="match status" value="1"/>
</dbReference>
<dbReference type="HAMAP" id="MF_00067">
    <property type="entry name" value="GmhA"/>
    <property type="match status" value="1"/>
</dbReference>
<dbReference type="InterPro" id="IPR035461">
    <property type="entry name" value="GmhA/DiaA"/>
</dbReference>
<dbReference type="InterPro" id="IPR004515">
    <property type="entry name" value="Phosphoheptose_Isoase"/>
</dbReference>
<dbReference type="InterPro" id="IPR001347">
    <property type="entry name" value="SIS_dom"/>
</dbReference>
<dbReference type="InterPro" id="IPR046348">
    <property type="entry name" value="SIS_dom_sf"/>
</dbReference>
<dbReference type="InterPro" id="IPR050099">
    <property type="entry name" value="SIS_GmhA/DiaA_subfam"/>
</dbReference>
<dbReference type="PANTHER" id="PTHR30390:SF6">
    <property type="entry name" value="DNAA INITIATOR-ASSOCIATING PROTEIN DIAA"/>
    <property type="match status" value="1"/>
</dbReference>
<dbReference type="PANTHER" id="PTHR30390">
    <property type="entry name" value="SEDOHEPTULOSE 7-PHOSPHATE ISOMERASE / DNAA INITIATOR-ASSOCIATING FACTOR FOR REPLICATION INITIATION"/>
    <property type="match status" value="1"/>
</dbReference>
<dbReference type="Pfam" id="PF13580">
    <property type="entry name" value="SIS_2"/>
    <property type="match status" value="1"/>
</dbReference>
<dbReference type="SUPFAM" id="SSF53697">
    <property type="entry name" value="SIS domain"/>
    <property type="match status" value="1"/>
</dbReference>
<dbReference type="PROSITE" id="PS51464">
    <property type="entry name" value="SIS"/>
    <property type="match status" value="1"/>
</dbReference>
<comment type="function">
    <text evidence="1">Catalyzes the isomerization of sedoheptulose 7-phosphate in D-glycero-D-manno-heptose 7-phosphate.</text>
</comment>
<comment type="catalytic activity">
    <reaction evidence="1">
        <text>2 D-sedoheptulose 7-phosphate = D-glycero-alpha-D-manno-heptose 7-phosphate + D-glycero-beta-D-manno-heptose 7-phosphate</text>
        <dbReference type="Rhea" id="RHEA:27489"/>
        <dbReference type="ChEBI" id="CHEBI:57483"/>
        <dbReference type="ChEBI" id="CHEBI:60203"/>
        <dbReference type="ChEBI" id="CHEBI:60204"/>
        <dbReference type="EC" id="5.3.1.28"/>
    </reaction>
</comment>
<comment type="cofactor">
    <cofactor evidence="1">
        <name>Zn(2+)</name>
        <dbReference type="ChEBI" id="CHEBI:29105"/>
    </cofactor>
    <text evidence="1">Binds 1 zinc ion per subunit.</text>
</comment>
<comment type="pathway">
    <text evidence="1">Carbohydrate biosynthesis; D-glycero-D-manno-heptose 7-phosphate biosynthesis; D-glycero-alpha-D-manno-heptose 7-phosphate and D-glycero-beta-D-manno-heptose 7-phosphate from sedoheptulose 7-phosphate: step 1/1.</text>
</comment>
<comment type="subcellular location">
    <subcellularLocation>
        <location evidence="1">Cytoplasm</location>
    </subcellularLocation>
</comment>
<comment type="miscellaneous">
    <text evidence="1">The reaction produces a racemic mixture of D-glycero-alpha-D-manno-heptose 7-phosphate and D-glycero-beta-D-manno-heptose 7-phosphate.</text>
</comment>
<comment type="similarity">
    <text evidence="1">Belongs to the SIS family. GmhA subfamily.</text>
</comment>
<reference key="1">
    <citation type="journal article" date="2006" name="Proc. Natl. Acad. Sci. U.S.A.">
        <title>Genome reduction in Leptospira borgpetersenii reflects limited transmission potential.</title>
        <authorList>
            <person name="Bulach D.M."/>
            <person name="Zuerner R.L."/>
            <person name="Wilson P."/>
            <person name="Seemann T."/>
            <person name="McGrath A."/>
            <person name="Cullen P.A."/>
            <person name="Davis J."/>
            <person name="Johnson M."/>
            <person name="Kuczek E."/>
            <person name="Alt D.P."/>
            <person name="Peterson-Burch B."/>
            <person name="Coppel R.L."/>
            <person name="Rood J.I."/>
            <person name="Davies J.K."/>
            <person name="Adler B."/>
        </authorList>
    </citation>
    <scope>NUCLEOTIDE SEQUENCE [LARGE SCALE GENOMIC DNA]</scope>
    <source>
        <strain>L550</strain>
    </source>
</reference>
<protein>
    <recommendedName>
        <fullName evidence="1">Phosphoheptose isomerase</fullName>
        <ecNumber evidence="1">5.3.1.28</ecNumber>
    </recommendedName>
    <alternativeName>
        <fullName evidence="1">Sedoheptulose 7-phosphate isomerase</fullName>
    </alternativeName>
</protein>
<accession>Q051Y7</accession>
<keyword id="KW-0119">Carbohydrate metabolism</keyword>
<keyword id="KW-0963">Cytoplasm</keyword>
<keyword id="KW-0413">Isomerase</keyword>
<keyword id="KW-0479">Metal-binding</keyword>
<keyword id="KW-0862">Zinc</keyword>